<keyword id="KW-0963">Cytoplasm</keyword>
<keyword id="KW-0396">Initiation factor</keyword>
<keyword id="KW-0648">Protein biosynthesis</keyword>
<keyword id="KW-1185">Reference proteome</keyword>
<keyword id="KW-0694">RNA-binding</keyword>
<keyword id="KW-0699">rRNA-binding</keyword>
<comment type="function">
    <text evidence="1">One of the essential components for the initiation of protein synthesis. Stabilizes the binding of IF-2 and IF-3 on the 30S subunit to which N-formylmethionyl-tRNA(fMet) subsequently binds. Helps modulate mRNA selection, yielding the 30S pre-initiation complex (PIC). Upon addition of the 50S ribosomal subunit IF-1, IF-2 and IF-3 are released leaving the mature 70S translation initiation complex.</text>
</comment>
<comment type="subunit">
    <text evidence="1">Component of the 30S ribosomal translation pre-initiation complex which assembles on the 30S ribosome in the order IF-2 and IF-3, IF-1 and N-formylmethionyl-tRNA(fMet); mRNA recruitment can occur at any time during PIC assembly.</text>
</comment>
<comment type="subcellular location">
    <subcellularLocation>
        <location evidence="1">Cytoplasm</location>
    </subcellularLocation>
</comment>
<comment type="similarity">
    <text evidence="1">Belongs to the IF-1 family.</text>
</comment>
<sequence length="87" mass="9871">MCQNGAQGSFRGAPPLSKEDVIEMEGTVLENLPNAMFKVELENKHSLLCHISGRMRKNYIRILPGDKVTVQLTPYDLTKGRISYRHK</sequence>
<reference key="1">
    <citation type="journal article" date="2009" name="Appl. Environ. Microbiol.">
        <title>Complete genome sequence of the chemolithoautotrophic marine magnetotactic coccus strain MC-1.</title>
        <authorList>
            <person name="Schubbe S."/>
            <person name="Williams T.J."/>
            <person name="Xie G."/>
            <person name="Kiss H.E."/>
            <person name="Brettin T.S."/>
            <person name="Martinez D."/>
            <person name="Ross C.A."/>
            <person name="Schuler D."/>
            <person name="Cox B.L."/>
            <person name="Nealson K.H."/>
            <person name="Bazylinski D.A."/>
        </authorList>
    </citation>
    <scope>NUCLEOTIDE SEQUENCE [LARGE SCALE GENOMIC DNA]</scope>
    <source>
        <strain>ATCC BAA-1437 / JCM 17883 / MC-1</strain>
    </source>
</reference>
<accession>A0L5J6</accession>
<gene>
    <name evidence="1" type="primary">infA</name>
    <name type="ordered locus">Mmc1_0718</name>
</gene>
<protein>
    <recommendedName>
        <fullName evidence="1">Translation initiation factor IF-1</fullName>
    </recommendedName>
</protein>
<proteinExistence type="inferred from homology"/>
<evidence type="ECO:0000255" key="1">
    <source>
        <dbReference type="HAMAP-Rule" id="MF_00075"/>
    </source>
</evidence>
<name>IF1_MAGMM</name>
<feature type="chain" id="PRO_0000338856" description="Translation initiation factor IF-1">
    <location>
        <begin position="1"/>
        <end position="87"/>
    </location>
</feature>
<feature type="domain" description="S1-like" evidence="1">
    <location>
        <begin position="16"/>
        <end position="87"/>
    </location>
</feature>
<dbReference type="EMBL" id="CP000471">
    <property type="protein sequence ID" value="ABK43239.1"/>
    <property type="molecule type" value="Genomic_DNA"/>
</dbReference>
<dbReference type="SMR" id="A0L5J6"/>
<dbReference type="STRING" id="156889.Mmc1_0718"/>
<dbReference type="KEGG" id="mgm:Mmc1_0718"/>
<dbReference type="eggNOG" id="COG0361">
    <property type="taxonomic scope" value="Bacteria"/>
</dbReference>
<dbReference type="HOGENOM" id="CLU_151267_1_0_5"/>
<dbReference type="Proteomes" id="UP000002586">
    <property type="component" value="Chromosome"/>
</dbReference>
<dbReference type="GO" id="GO:0005829">
    <property type="term" value="C:cytosol"/>
    <property type="evidence" value="ECO:0007669"/>
    <property type="project" value="TreeGrafter"/>
</dbReference>
<dbReference type="GO" id="GO:0043022">
    <property type="term" value="F:ribosome binding"/>
    <property type="evidence" value="ECO:0007669"/>
    <property type="project" value="UniProtKB-UniRule"/>
</dbReference>
<dbReference type="GO" id="GO:0019843">
    <property type="term" value="F:rRNA binding"/>
    <property type="evidence" value="ECO:0007669"/>
    <property type="project" value="UniProtKB-UniRule"/>
</dbReference>
<dbReference type="GO" id="GO:0003743">
    <property type="term" value="F:translation initiation factor activity"/>
    <property type="evidence" value="ECO:0007669"/>
    <property type="project" value="UniProtKB-UniRule"/>
</dbReference>
<dbReference type="CDD" id="cd04451">
    <property type="entry name" value="S1_IF1"/>
    <property type="match status" value="1"/>
</dbReference>
<dbReference type="FunFam" id="2.40.50.140:FF:000002">
    <property type="entry name" value="Translation initiation factor IF-1"/>
    <property type="match status" value="1"/>
</dbReference>
<dbReference type="Gene3D" id="2.40.50.140">
    <property type="entry name" value="Nucleic acid-binding proteins"/>
    <property type="match status" value="1"/>
</dbReference>
<dbReference type="HAMAP" id="MF_00075">
    <property type="entry name" value="IF_1"/>
    <property type="match status" value="1"/>
</dbReference>
<dbReference type="InterPro" id="IPR012340">
    <property type="entry name" value="NA-bd_OB-fold"/>
</dbReference>
<dbReference type="InterPro" id="IPR006196">
    <property type="entry name" value="RNA-binding_domain_S1_IF1"/>
</dbReference>
<dbReference type="InterPro" id="IPR003029">
    <property type="entry name" value="S1_domain"/>
</dbReference>
<dbReference type="InterPro" id="IPR004368">
    <property type="entry name" value="TIF_IF1"/>
</dbReference>
<dbReference type="NCBIfam" id="TIGR00008">
    <property type="entry name" value="infA"/>
    <property type="match status" value="1"/>
</dbReference>
<dbReference type="PANTHER" id="PTHR33370">
    <property type="entry name" value="TRANSLATION INITIATION FACTOR IF-1, CHLOROPLASTIC"/>
    <property type="match status" value="1"/>
</dbReference>
<dbReference type="PANTHER" id="PTHR33370:SF1">
    <property type="entry name" value="TRANSLATION INITIATION FACTOR IF-1, CHLOROPLASTIC"/>
    <property type="match status" value="1"/>
</dbReference>
<dbReference type="Pfam" id="PF01176">
    <property type="entry name" value="eIF-1a"/>
    <property type="match status" value="1"/>
</dbReference>
<dbReference type="SMART" id="SM00316">
    <property type="entry name" value="S1"/>
    <property type="match status" value="1"/>
</dbReference>
<dbReference type="SUPFAM" id="SSF50249">
    <property type="entry name" value="Nucleic acid-binding proteins"/>
    <property type="match status" value="1"/>
</dbReference>
<dbReference type="PROSITE" id="PS50832">
    <property type="entry name" value="S1_IF1_TYPE"/>
    <property type="match status" value="1"/>
</dbReference>
<organism>
    <name type="scientific">Magnetococcus marinus (strain ATCC BAA-1437 / JCM 17883 / MC-1)</name>
    <dbReference type="NCBI Taxonomy" id="156889"/>
    <lineage>
        <taxon>Bacteria</taxon>
        <taxon>Pseudomonadati</taxon>
        <taxon>Pseudomonadota</taxon>
        <taxon>Alphaproteobacteria</taxon>
        <taxon>Magnetococcales</taxon>
        <taxon>Magnetococcaceae</taxon>
        <taxon>Magnetococcus</taxon>
    </lineage>
</organism>